<keyword id="KW-0456">Lyase</keyword>
<keyword id="KW-0501">Molybdenum cofactor biosynthesis</keyword>
<keyword id="KW-1185">Reference proteome</keyword>
<accession>Q8ZGW4</accession>
<accession>Q0WHN9</accession>
<sequence>MTQLTHINTAGEAHMVDVSAKNETVREARAEAFVDMQAATLAMIIDGSHHKGDVFATARIAGIQAAKKTWELIPLCHPLLLTKVEVKLEAQPEHNRVRIETCCRLTGKTGVEMEALTAASVAALTIYDMCKAVQKDMIIGPVRLLTKSGGKSGDFKVDI</sequence>
<evidence type="ECO:0000255" key="1">
    <source>
        <dbReference type="HAMAP-Rule" id="MF_01224"/>
    </source>
</evidence>
<evidence type="ECO:0000305" key="2"/>
<comment type="function">
    <text evidence="1">Catalyzes the conversion of (8S)-3',8-cyclo-7,8-dihydroguanosine 5'-triphosphate to cyclic pyranopterin monophosphate (cPMP).</text>
</comment>
<comment type="catalytic activity">
    <reaction evidence="1">
        <text>(8S)-3',8-cyclo-7,8-dihydroguanosine 5'-triphosphate = cyclic pyranopterin phosphate + diphosphate</text>
        <dbReference type="Rhea" id="RHEA:49580"/>
        <dbReference type="ChEBI" id="CHEBI:33019"/>
        <dbReference type="ChEBI" id="CHEBI:59648"/>
        <dbReference type="ChEBI" id="CHEBI:131766"/>
        <dbReference type="EC" id="4.6.1.17"/>
    </reaction>
</comment>
<comment type="pathway">
    <text evidence="1">Cofactor biosynthesis; molybdopterin biosynthesis.</text>
</comment>
<comment type="subunit">
    <text evidence="1">Homohexamer; trimer of dimers.</text>
</comment>
<comment type="similarity">
    <text evidence="1">Belongs to the MoaC family.</text>
</comment>
<comment type="sequence caution" evidence="2">
    <conflict type="erroneous initiation">
        <sequence resource="EMBL-CDS" id="AAM86572"/>
    </conflict>
</comment>
<comment type="sequence caution" evidence="2">
    <conflict type="erroneous initiation">
        <sequence resource="EMBL-CDS" id="AAS61250"/>
    </conflict>
</comment>
<reference key="1">
    <citation type="journal article" date="2001" name="Nature">
        <title>Genome sequence of Yersinia pestis, the causative agent of plague.</title>
        <authorList>
            <person name="Parkhill J."/>
            <person name="Wren B.W."/>
            <person name="Thomson N.R."/>
            <person name="Titball R.W."/>
            <person name="Holden M.T.G."/>
            <person name="Prentice M.B."/>
            <person name="Sebaihia M."/>
            <person name="James K.D."/>
            <person name="Churcher C.M."/>
            <person name="Mungall K.L."/>
            <person name="Baker S."/>
            <person name="Basham D."/>
            <person name="Bentley S.D."/>
            <person name="Brooks K."/>
            <person name="Cerdeno-Tarraga A.-M."/>
            <person name="Chillingworth T."/>
            <person name="Cronin A."/>
            <person name="Davies R.M."/>
            <person name="Davis P."/>
            <person name="Dougan G."/>
            <person name="Feltwell T."/>
            <person name="Hamlin N."/>
            <person name="Holroyd S."/>
            <person name="Jagels K."/>
            <person name="Karlyshev A.V."/>
            <person name="Leather S."/>
            <person name="Moule S."/>
            <person name="Oyston P.C.F."/>
            <person name="Quail M.A."/>
            <person name="Rutherford K.M."/>
            <person name="Simmonds M."/>
            <person name="Skelton J."/>
            <person name="Stevens K."/>
            <person name="Whitehead S."/>
            <person name="Barrell B.G."/>
        </authorList>
    </citation>
    <scope>NUCLEOTIDE SEQUENCE [LARGE SCALE GENOMIC DNA]</scope>
    <source>
        <strain>CO-92 / Biovar Orientalis</strain>
    </source>
</reference>
<reference key="2">
    <citation type="journal article" date="2002" name="J. Bacteriol.">
        <title>Genome sequence of Yersinia pestis KIM.</title>
        <authorList>
            <person name="Deng W."/>
            <person name="Burland V."/>
            <person name="Plunkett G. III"/>
            <person name="Boutin A."/>
            <person name="Mayhew G.F."/>
            <person name="Liss P."/>
            <person name="Perna N.T."/>
            <person name="Rose D.J."/>
            <person name="Mau B."/>
            <person name="Zhou S."/>
            <person name="Schwartz D.C."/>
            <person name="Fetherston J.D."/>
            <person name="Lindler L.E."/>
            <person name="Brubaker R.R."/>
            <person name="Plano G.V."/>
            <person name="Straley S.C."/>
            <person name="McDonough K.A."/>
            <person name="Nilles M.L."/>
            <person name="Matson J.S."/>
            <person name="Blattner F.R."/>
            <person name="Perry R.D."/>
        </authorList>
    </citation>
    <scope>NUCLEOTIDE SEQUENCE [LARGE SCALE GENOMIC DNA]</scope>
    <source>
        <strain>KIM10+ / Biovar Mediaevalis</strain>
    </source>
</reference>
<reference key="3">
    <citation type="journal article" date="2004" name="DNA Res.">
        <title>Complete genome sequence of Yersinia pestis strain 91001, an isolate avirulent to humans.</title>
        <authorList>
            <person name="Song Y."/>
            <person name="Tong Z."/>
            <person name="Wang J."/>
            <person name="Wang L."/>
            <person name="Guo Z."/>
            <person name="Han Y."/>
            <person name="Zhang J."/>
            <person name="Pei D."/>
            <person name="Zhou D."/>
            <person name="Qin H."/>
            <person name="Pang X."/>
            <person name="Han Y."/>
            <person name="Zhai J."/>
            <person name="Li M."/>
            <person name="Cui B."/>
            <person name="Qi Z."/>
            <person name="Jin L."/>
            <person name="Dai R."/>
            <person name="Chen F."/>
            <person name="Li S."/>
            <person name="Ye C."/>
            <person name="Du Z."/>
            <person name="Lin W."/>
            <person name="Wang J."/>
            <person name="Yu J."/>
            <person name="Yang H."/>
            <person name="Wang J."/>
            <person name="Huang P."/>
            <person name="Yang R."/>
        </authorList>
    </citation>
    <scope>NUCLEOTIDE SEQUENCE [LARGE SCALE GENOMIC DNA]</scope>
    <source>
        <strain>91001 / Biovar Mediaevalis</strain>
    </source>
</reference>
<dbReference type="EC" id="4.6.1.17" evidence="1"/>
<dbReference type="EMBL" id="AL590842">
    <property type="protein sequence ID" value="CAL19824.1"/>
    <property type="molecule type" value="Genomic_DNA"/>
</dbReference>
<dbReference type="EMBL" id="AE009952">
    <property type="protein sequence ID" value="AAM86572.1"/>
    <property type="status" value="ALT_INIT"/>
    <property type="molecule type" value="Genomic_DNA"/>
</dbReference>
<dbReference type="EMBL" id="AE017042">
    <property type="protein sequence ID" value="AAS61250.1"/>
    <property type="status" value="ALT_INIT"/>
    <property type="molecule type" value="Genomic_DNA"/>
</dbReference>
<dbReference type="PIR" id="AF0142">
    <property type="entry name" value="AF0142"/>
</dbReference>
<dbReference type="RefSeq" id="WP_002210772.1">
    <property type="nucleotide sequence ID" value="NZ_WUCM01000016.1"/>
</dbReference>
<dbReference type="RefSeq" id="YP_002346199.1">
    <property type="nucleotide sequence ID" value="NC_003143.1"/>
</dbReference>
<dbReference type="SMR" id="Q8ZGW4"/>
<dbReference type="STRING" id="214092.YPO1160"/>
<dbReference type="PaxDb" id="214092-YPO1160"/>
<dbReference type="DNASU" id="1147968"/>
<dbReference type="EnsemblBacteria" id="AAS61250">
    <property type="protein sequence ID" value="AAS61250"/>
    <property type="gene ID" value="YP_0999"/>
</dbReference>
<dbReference type="GeneID" id="57977299"/>
<dbReference type="KEGG" id="ype:YPO1160"/>
<dbReference type="KEGG" id="ypk:y3021"/>
<dbReference type="KEGG" id="ypm:YP_0999"/>
<dbReference type="PATRIC" id="fig|214092.21.peg.1457"/>
<dbReference type="eggNOG" id="COG0315">
    <property type="taxonomic scope" value="Bacteria"/>
</dbReference>
<dbReference type="HOGENOM" id="CLU_074693_1_1_6"/>
<dbReference type="OMA" id="IWDMVKS"/>
<dbReference type="OrthoDB" id="9794429at2"/>
<dbReference type="UniPathway" id="UPA00344"/>
<dbReference type="Proteomes" id="UP000000815">
    <property type="component" value="Chromosome"/>
</dbReference>
<dbReference type="Proteomes" id="UP000001019">
    <property type="component" value="Chromosome"/>
</dbReference>
<dbReference type="Proteomes" id="UP000002490">
    <property type="component" value="Chromosome"/>
</dbReference>
<dbReference type="GO" id="GO:0061799">
    <property type="term" value="F:cyclic pyranopterin monophosphate synthase activity"/>
    <property type="evidence" value="ECO:0007669"/>
    <property type="project" value="UniProtKB-UniRule"/>
</dbReference>
<dbReference type="GO" id="GO:0006777">
    <property type="term" value="P:Mo-molybdopterin cofactor biosynthetic process"/>
    <property type="evidence" value="ECO:0007669"/>
    <property type="project" value="UniProtKB-UniRule"/>
</dbReference>
<dbReference type="CDD" id="cd01420">
    <property type="entry name" value="MoaC_PE"/>
    <property type="match status" value="1"/>
</dbReference>
<dbReference type="FunFam" id="3.30.70.640:FF:000001">
    <property type="entry name" value="Cyclic pyranopterin monophosphate synthase"/>
    <property type="match status" value="1"/>
</dbReference>
<dbReference type="Gene3D" id="3.30.70.640">
    <property type="entry name" value="Molybdopterin cofactor biosynthesis C (MoaC) domain"/>
    <property type="match status" value="1"/>
</dbReference>
<dbReference type="HAMAP" id="MF_01224_B">
    <property type="entry name" value="MoaC_B"/>
    <property type="match status" value="1"/>
</dbReference>
<dbReference type="InterPro" id="IPR023045">
    <property type="entry name" value="MoaC"/>
</dbReference>
<dbReference type="InterPro" id="IPR047594">
    <property type="entry name" value="MoaC_bact/euk"/>
</dbReference>
<dbReference type="InterPro" id="IPR036522">
    <property type="entry name" value="MoaC_sf"/>
</dbReference>
<dbReference type="InterPro" id="IPR050105">
    <property type="entry name" value="MoCo_biosynth_MoaA/MoaC"/>
</dbReference>
<dbReference type="InterPro" id="IPR002820">
    <property type="entry name" value="Mopterin_CF_biosynth-C_dom"/>
</dbReference>
<dbReference type="NCBIfam" id="TIGR00581">
    <property type="entry name" value="moaC"/>
    <property type="match status" value="1"/>
</dbReference>
<dbReference type="NCBIfam" id="NF006870">
    <property type="entry name" value="PRK09364.1"/>
    <property type="match status" value="1"/>
</dbReference>
<dbReference type="PANTHER" id="PTHR22960">
    <property type="entry name" value="MOLYBDOPTERIN COFACTOR SYNTHESIS PROTEIN A"/>
    <property type="match status" value="1"/>
</dbReference>
<dbReference type="Pfam" id="PF01967">
    <property type="entry name" value="MoaC"/>
    <property type="match status" value="1"/>
</dbReference>
<dbReference type="SUPFAM" id="SSF55040">
    <property type="entry name" value="Molybdenum cofactor biosynthesis protein C, MoaC"/>
    <property type="match status" value="1"/>
</dbReference>
<feature type="chain" id="PRO_0000097847" description="Cyclic pyranopterin monophosphate synthase">
    <location>
        <begin position="1"/>
        <end position="159"/>
    </location>
</feature>
<feature type="active site" evidence="1">
    <location>
        <position position="128"/>
    </location>
</feature>
<feature type="binding site" evidence="1">
    <location>
        <begin position="75"/>
        <end position="77"/>
    </location>
    <ligand>
        <name>substrate</name>
    </ligand>
</feature>
<feature type="binding site" evidence="1">
    <location>
        <begin position="113"/>
        <end position="114"/>
    </location>
    <ligand>
        <name>substrate</name>
    </ligand>
</feature>
<gene>
    <name evidence="1" type="primary">moaC</name>
    <name type="ordered locus">YPO1160</name>
    <name type="ordered locus">y3021</name>
    <name type="ordered locus">YP_0999</name>
</gene>
<organism>
    <name type="scientific">Yersinia pestis</name>
    <dbReference type="NCBI Taxonomy" id="632"/>
    <lineage>
        <taxon>Bacteria</taxon>
        <taxon>Pseudomonadati</taxon>
        <taxon>Pseudomonadota</taxon>
        <taxon>Gammaproteobacteria</taxon>
        <taxon>Enterobacterales</taxon>
        <taxon>Yersiniaceae</taxon>
        <taxon>Yersinia</taxon>
    </lineage>
</organism>
<proteinExistence type="inferred from homology"/>
<protein>
    <recommendedName>
        <fullName evidence="1">Cyclic pyranopterin monophosphate synthase</fullName>
        <ecNumber evidence="1">4.6.1.17</ecNumber>
    </recommendedName>
    <alternativeName>
        <fullName evidence="1">Molybdenum cofactor biosynthesis protein C</fullName>
    </alternativeName>
</protein>
<name>MOAC_YERPE</name>